<comment type="function">
    <text evidence="1">Binds 16S rRNA, required for the assembly of 30S particles and may also be responsible for determining the conformation of the 16S rRNA at the A site.</text>
</comment>
<comment type="subunit">
    <text evidence="1">Part of the 30S ribosomal subunit. Contacts proteins S3 and S10.</text>
</comment>
<comment type="similarity">
    <text evidence="1">Belongs to the universal ribosomal protein uS14 family.</text>
</comment>
<protein>
    <recommendedName>
        <fullName evidence="1">Small ribosomal subunit protein uS14</fullName>
    </recommendedName>
    <alternativeName>
        <fullName evidence="3">30S ribosomal protein S14</fullName>
    </alternativeName>
</protein>
<reference key="1">
    <citation type="submission" date="2006-12" db="EMBL/GenBank/DDBJ databases">
        <title>Complete sequence of Halorhodospira halophila SL1.</title>
        <authorList>
            <consortium name="US DOE Joint Genome Institute"/>
            <person name="Copeland A."/>
            <person name="Lucas S."/>
            <person name="Lapidus A."/>
            <person name="Barry K."/>
            <person name="Detter J.C."/>
            <person name="Glavina del Rio T."/>
            <person name="Hammon N."/>
            <person name="Israni S."/>
            <person name="Dalin E."/>
            <person name="Tice H."/>
            <person name="Pitluck S."/>
            <person name="Saunders E."/>
            <person name="Brettin T."/>
            <person name="Bruce D."/>
            <person name="Han C."/>
            <person name="Tapia R."/>
            <person name="Schmutz J."/>
            <person name="Larimer F."/>
            <person name="Land M."/>
            <person name="Hauser L."/>
            <person name="Kyrpides N."/>
            <person name="Mikhailova N."/>
            <person name="Hoff W."/>
            <person name="Richardson P."/>
        </authorList>
    </citation>
    <scope>NUCLEOTIDE SEQUENCE [LARGE SCALE GENOMIC DNA]</scope>
    <source>
        <strain>DSM 244 / SL1</strain>
    </source>
</reference>
<feature type="chain" id="PRO_1000128420" description="Small ribosomal subunit protein uS14">
    <location>
        <begin position="1"/>
        <end position="101"/>
    </location>
</feature>
<feature type="region of interest" description="Disordered" evidence="2">
    <location>
        <begin position="1"/>
        <end position="20"/>
    </location>
</feature>
<feature type="compositionally biased region" description="Basic and acidic residues" evidence="2">
    <location>
        <begin position="1"/>
        <end position="10"/>
    </location>
</feature>
<organism>
    <name type="scientific">Halorhodospira halophila (strain DSM 244 / SL1)</name>
    <name type="common">Ectothiorhodospira halophila (strain DSM 244 / SL1)</name>
    <dbReference type="NCBI Taxonomy" id="349124"/>
    <lineage>
        <taxon>Bacteria</taxon>
        <taxon>Pseudomonadati</taxon>
        <taxon>Pseudomonadota</taxon>
        <taxon>Gammaproteobacteria</taxon>
        <taxon>Chromatiales</taxon>
        <taxon>Ectothiorhodospiraceae</taxon>
        <taxon>Halorhodospira</taxon>
    </lineage>
</organism>
<evidence type="ECO:0000255" key="1">
    <source>
        <dbReference type="HAMAP-Rule" id="MF_00537"/>
    </source>
</evidence>
<evidence type="ECO:0000256" key="2">
    <source>
        <dbReference type="SAM" id="MobiDB-lite"/>
    </source>
</evidence>
<evidence type="ECO:0000305" key="3"/>
<gene>
    <name evidence="1" type="primary">rpsN</name>
    <name type="ordered locus">Hhal_0845</name>
</gene>
<proteinExistence type="inferred from homology"/>
<accession>A1WVA9</accession>
<name>RS14_HALHL</name>
<keyword id="KW-1185">Reference proteome</keyword>
<keyword id="KW-0687">Ribonucleoprotein</keyword>
<keyword id="KW-0689">Ribosomal protein</keyword>
<keyword id="KW-0694">RNA-binding</keyword>
<keyword id="KW-0699">rRNA-binding</keyword>
<sequence length="101" mass="11804">MAKNSMVERDRKRRKLAQKYSAKRERLKAIIESPESSVEERFEAQLKLQQIPRNASPVRQRNRCAKSGRPRGYYRKFGLARNELRRAAMNGEIPGLTLSSW</sequence>
<dbReference type="EMBL" id="CP000544">
    <property type="protein sequence ID" value="ABM61621.1"/>
    <property type="molecule type" value="Genomic_DNA"/>
</dbReference>
<dbReference type="RefSeq" id="WP_011813644.1">
    <property type="nucleotide sequence ID" value="NC_008789.1"/>
</dbReference>
<dbReference type="SMR" id="A1WVA9"/>
<dbReference type="STRING" id="349124.Hhal_0845"/>
<dbReference type="KEGG" id="hha:Hhal_0845"/>
<dbReference type="eggNOG" id="COG0199">
    <property type="taxonomic scope" value="Bacteria"/>
</dbReference>
<dbReference type="HOGENOM" id="CLU_139869_0_1_6"/>
<dbReference type="OrthoDB" id="9810484at2"/>
<dbReference type="Proteomes" id="UP000000647">
    <property type="component" value="Chromosome"/>
</dbReference>
<dbReference type="GO" id="GO:0005737">
    <property type="term" value="C:cytoplasm"/>
    <property type="evidence" value="ECO:0007669"/>
    <property type="project" value="UniProtKB-ARBA"/>
</dbReference>
<dbReference type="GO" id="GO:0015935">
    <property type="term" value="C:small ribosomal subunit"/>
    <property type="evidence" value="ECO:0007669"/>
    <property type="project" value="TreeGrafter"/>
</dbReference>
<dbReference type="GO" id="GO:0019843">
    <property type="term" value="F:rRNA binding"/>
    <property type="evidence" value="ECO:0007669"/>
    <property type="project" value="UniProtKB-UniRule"/>
</dbReference>
<dbReference type="GO" id="GO:0003735">
    <property type="term" value="F:structural constituent of ribosome"/>
    <property type="evidence" value="ECO:0007669"/>
    <property type="project" value="InterPro"/>
</dbReference>
<dbReference type="GO" id="GO:0006412">
    <property type="term" value="P:translation"/>
    <property type="evidence" value="ECO:0007669"/>
    <property type="project" value="UniProtKB-UniRule"/>
</dbReference>
<dbReference type="FunFam" id="1.10.287.1480:FF:000001">
    <property type="entry name" value="30S ribosomal protein S14"/>
    <property type="match status" value="1"/>
</dbReference>
<dbReference type="Gene3D" id="1.10.287.1480">
    <property type="match status" value="1"/>
</dbReference>
<dbReference type="HAMAP" id="MF_00537">
    <property type="entry name" value="Ribosomal_uS14_1"/>
    <property type="match status" value="1"/>
</dbReference>
<dbReference type="InterPro" id="IPR001209">
    <property type="entry name" value="Ribosomal_uS14"/>
</dbReference>
<dbReference type="InterPro" id="IPR023036">
    <property type="entry name" value="Ribosomal_uS14_bac/plastid"/>
</dbReference>
<dbReference type="NCBIfam" id="NF006477">
    <property type="entry name" value="PRK08881.1"/>
    <property type="match status" value="1"/>
</dbReference>
<dbReference type="PANTHER" id="PTHR19836">
    <property type="entry name" value="30S RIBOSOMAL PROTEIN S14"/>
    <property type="match status" value="1"/>
</dbReference>
<dbReference type="PANTHER" id="PTHR19836:SF19">
    <property type="entry name" value="SMALL RIBOSOMAL SUBUNIT PROTEIN US14M"/>
    <property type="match status" value="1"/>
</dbReference>
<dbReference type="Pfam" id="PF00253">
    <property type="entry name" value="Ribosomal_S14"/>
    <property type="match status" value="1"/>
</dbReference>
<dbReference type="SUPFAM" id="SSF57716">
    <property type="entry name" value="Glucocorticoid receptor-like (DNA-binding domain)"/>
    <property type="match status" value="1"/>
</dbReference>